<organism>
    <name type="scientific">Human cytomegalovirus (strain AD169)</name>
    <name type="common">HHV-5</name>
    <name type="synonym">Human herpesvirus 5</name>
    <dbReference type="NCBI Taxonomy" id="10360"/>
    <lineage>
        <taxon>Viruses</taxon>
        <taxon>Duplodnaviria</taxon>
        <taxon>Heunggongvirae</taxon>
        <taxon>Peploviricota</taxon>
        <taxon>Herviviricetes</taxon>
        <taxon>Herpesvirales</taxon>
        <taxon>Orthoherpesviridae</taxon>
        <taxon>Betaherpesvirinae</taxon>
        <taxon>Cytomegalovirus</taxon>
        <taxon>Cytomegalovirus humanbeta5</taxon>
        <taxon>Human cytomegalovirus</taxon>
    </lineage>
</organism>
<dbReference type="EMBL" id="X17403">
    <property type="protein sequence ID" value="CAA35461.1"/>
    <property type="molecule type" value="Genomic_DNA"/>
</dbReference>
<dbReference type="EMBL" id="X17403">
    <property type="protein sequence ID" value="CAA35297.1"/>
    <property type="molecule type" value="Genomic_DNA"/>
</dbReference>
<dbReference type="EMBL" id="BK000394">
    <property type="protein sequence ID" value="DAA00232.1"/>
    <property type="molecule type" value="Genomic_DNA"/>
</dbReference>
<dbReference type="EMBL" id="BK000394">
    <property type="protein sequence ID" value="DAA00237.1"/>
    <property type="molecule type" value="Genomic_DNA"/>
</dbReference>
<dbReference type="PIR" id="S09762">
    <property type="entry name" value="S09762"/>
</dbReference>
<dbReference type="Proteomes" id="UP000008991">
    <property type="component" value="Segment"/>
</dbReference>
<dbReference type="Proteomes" id="UP000008992">
    <property type="component" value="Segment"/>
</dbReference>
<name>IR13_HCMVA</name>
<organismHost>
    <name type="scientific">Homo sapiens</name>
    <name type="common">Human</name>
    <dbReference type="NCBI Taxonomy" id="9606"/>
</organismHost>
<keyword id="KW-1185">Reference proteome</keyword>
<proteinExistence type="predicted"/>
<reference key="1">
    <citation type="journal article" date="1990" name="Curr. Top. Microbiol. Immunol.">
        <title>Analysis of the protein-coding content of the sequence of human cytomegalovirus strain AD169.</title>
        <authorList>
            <person name="Chee M.S."/>
            <person name="Bankier A.T."/>
            <person name="Beck S."/>
            <person name="Bohni R."/>
            <person name="Brown C.M."/>
            <person name="Cerny R."/>
            <person name="Horsnell T."/>
            <person name="Hutchison C.A. III"/>
            <person name="Kouzarides T."/>
            <person name="Martignetti J.A."/>
            <person name="Preddie E."/>
            <person name="Satchwell S.C."/>
            <person name="Tomlinson P."/>
            <person name="Weston K.M."/>
            <person name="Barrell B.G."/>
        </authorList>
    </citation>
    <scope>NUCLEOTIDE SEQUENCE [LARGE SCALE GENOMIC DNA]</scope>
</reference>
<reference key="2">
    <citation type="journal article" date="2003" name="J. Gen. Virol.">
        <title>The human cytomegalovirus genome revisited: comparison with the chimpanzee cytomegalovirus genome.</title>
        <authorList>
            <person name="Davison A.J."/>
            <person name="Dolan A."/>
            <person name="Akter P."/>
            <person name="Addison C."/>
            <person name="Dargan D.J."/>
            <person name="Alcendor D.J."/>
            <person name="McGeoch D.J."/>
            <person name="Hayward G.S."/>
        </authorList>
    </citation>
    <scope>GENOME REANNOTATION</scope>
</reference>
<reference key="3">
    <citation type="journal article" date="2003" name="J. Gen. Virol.">
        <authorList>
            <person name="Davison A.J."/>
            <person name="Dolan A."/>
            <person name="Akter P."/>
            <person name="Addison C."/>
            <person name="Dargan D.J."/>
            <person name="Alcendor D.J."/>
            <person name="McGeoch D.J."/>
            <person name="Hayward G.S."/>
        </authorList>
    </citation>
    <scope>ERRATUM OF PUBMED:12533697</scope>
</reference>
<feature type="chain" id="PRO_0000115259" description="Uncharacterized protein IRL13">
    <location>
        <begin position="1"/>
        <end position="147"/>
    </location>
</feature>
<accession>P16811</accession>
<accession>Q7M575</accession>
<protein>
    <recommendedName>
        <fullName>Uncharacterized protein IRL13</fullName>
        <shortName>TRL13</shortName>
    </recommendedName>
</protein>
<sequence length="147" mass="15888">MDWRFTVMWTILISALSESCNQTCSCQCPCSTTVNYSTSTETATSTYSTTVISNKSTSESINCSTATAPATTVSTKPSKTTTQISTTTNTNVETTTCTNTTTTVTCDGFNYTVHKRCDRSYEVINVTGYVGGNITLKNAIRLRNGTM</sequence>